<feature type="chain" id="PRO_0000096295" description="Microcephalin">
    <location>
        <begin position="1"/>
        <end position="835"/>
    </location>
</feature>
<feature type="domain" description="BRCT 1" evidence="4">
    <location>
        <begin position="1"/>
        <end position="93"/>
    </location>
</feature>
<feature type="domain" description="BRCT 2" evidence="4">
    <location>
        <begin position="640"/>
        <end position="730"/>
    </location>
</feature>
<feature type="domain" description="BRCT 3" evidence="4">
    <location>
        <begin position="751"/>
        <end position="833"/>
    </location>
</feature>
<feature type="region of interest" description="Disordered" evidence="5">
    <location>
        <begin position="184"/>
        <end position="206"/>
    </location>
</feature>
<feature type="region of interest" description="Disordered" evidence="5">
    <location>
        <begin position="346"/>
        <end position="376"/>
    </location>
</feature>
<feature type="region of interest" description="Disordered" evidence="5">
    <location>
        <begin position="418"/>
        <end position="442"/>
    </location>
</feature>
<feature type="region of interest" description="Disordered" evidence="5">
    <location>
        <begin position="557"/>
        <end position="582"/>
    </location>
</feature>
<feature type="compositionally biased region" description="Polar residues" evidence="5">
    <location>
        <begin position="190"/>
        <end position="206"/>
    </location>
</feature>
<feature type="compositionally biased region" description="Basic residues" evidence="5">
    <location>
        <begin position="346"/>
        <end position="361"/>
    </location>
</feature>
<feature type="compositionally biased region" description="Polar residues" evidence="5">
    <location>
        <begin position="559"/>
        <end position="577"/>
    </location>
</feature>
<feature type="modified residue" description="Phosphoserine" evidence="3">
    <location>
        <position position="279"/>
    </location>
</feature>
<feature type="modified residue" description="Phosphoserine" evidence="3">
    <location>
        <position position="287"/>
    </location>
</feature>
<feature type="modified residue" description="Phosphoserine" evidence="2">
    <location>
        <position position="296"/>
    </location>
</feature>
<feature type="modified residue" description="Phosphoserine" evidence="3">
    <location>
        <position position="333"/>
    </location>
</feature>
<feature type="modified residue" description="Phosphothreonine" evidence="3">
    <location>
        <position position="335"/>
    </location>
</feature>
<feature type="modified residue" description="Phosphoserine" evidence="3">
    <location>
        <position position="548"/>
    </location>
</feature>
<comment type="function">
    <text evidence="1">Implicated in chromosome condensation and DNA damage induced cellular responses. May play a role in neurogenesis and regulation of the size of the cerebral cortex (By similarity).</text>
</comment>
<comment type="subunit">
    <text evidence="1">Interacts with CDC27 and maybe other components of the APC/C complex. Interacts with histone variant H2AX under DNA damage conditions (By similarity).</text>
</comment>
<comment type="subcellular location">
    <subcellularLocation>
        <location evidence="1">Cytoplasm</location>
        <location evidence="1">Cytoskeleton</location>
        <location evidence="1">Microtubule organizing center</location>
        <location evidence="1">Centrosome</location>
    </subcellularLocation>
</comment>
<comment type="domain">
    <text evidence="1">BRCT domain 1 is required to prevent abnormal chromosome condensation. It binds directly to the SWI-SNF chromatin remodeling complex (By similarity).</text>
</comment>
<comment type="domain">
    <text evidence="1">BRCT domains 2 and 3 recognize phosphoserine/phosphothreonine marks on proteins with high selectivity, and mediate interaction with phosphorylated CDC27. They also mediate the dual recognition of phosphoserine and phosphotyrosine in the C-terminal tail of histone H2AX (By similarity).</text>
</comment>
<name>MCPH1_GORGO</name>
<organism>
    <name type="scientific">Gorilla gorilla gorilla</name>
    <name type="common">Western lowland gorilla</name>
    <dbReference type="NCBI Taxonomy" id="9595"/>
    <lineage>
        <taxon>Eukaryota</taxon>
        <taxon>Metazoa</taxon>
        <taxon>Chordata</taxon>
        <taxon>Craniata</taxon>
        <taxon>Vertebrata</taxon>
        <taxon>Euteleostomi</taxon>
        <taxon>Mammalia</taxon>
        <taxon>Eutheria</taxon>
        <taxon>Euarchontoglires</taxon>
        <taxon>Primates</taxon>
        <taxon>Haplorrhini</taxon>
        <taxon>Catarrhini</taxon>
        <taxon>Hominidae</taxon>
        <taxon>Gorilla</taxon>
    </lineage>
</organism>
<accession>P61591</accession>
<dbReference type="EMBL" id="AY553009">
    <property type="protein sequence ID" value="AAS91382.1"/>
    <property type="molecule type" value="Genomic_DNA"/>
</dbReference>
<dbReference type="EMBL" id="AY552996">
    <property type="protein sequence ID" value="AAS91382.1"/>
    <property type="status" value="JOINED"/>
    <property type="molecule type" value="Genomic_DNA"/>
</dbReference>
<dbReference type="EMBL" id="AY552997">
    <property type="protein sequence ID" value="AAS91382.1"/>
    <property type="status" value="JOINED"/>
    <property type="molecule type" value="Genomic_DNA"/>
</dbReference>
<dbReference type="EMBL" id="AY552998">
    <property type="protein sequence ID" value="AAS91382.1"/>
    <property type="status" value="JOINED"/>
    <property type="molecule type" value="Genomic_DNA"/>
</dbReference>
<dbReference type="EMBL" id="AY552999">
    <property type="protein sequence ID" value="AAS91382.1"/>
    <property type="status" value="JOINED"/>
    <property type="molecule type" value="Genomic_DNA"/>
</dbReference>
<dbReference type="EMBL" id="AY553000">
    <property type="protein sequence ID" value="AAS91382.1"/>
    <property type="status" value="JOINED"/>
    <property type="molecule type" value="Genomic_DNA"/>
</dbReference>
<dbReference type="EMBL" id="AY553001">
    <property type="protein sequence ID" value="AAS91382.1"/>
    <property type="status" value="JOINED"/>
    <property type="molecule type" value="Genomic_DNA"/>
</dbReference>
<dbReference type="EMBL" id="AY553002">
    <property type="protein sequence ID" value="AAS91382.1"/>
    <property type="status" value="JOINED"/>
    <property type="molecule type" value="Genomic_DNA"/>
</dbReference>
<dbReference type="EMBL" id="AY553003">
    <property type="protein sequence ID" value="AAS91382.1"/>
    <property type="status" value="JOINED"/>
    <property type="molecule type" value="Genomic_DNA"/>
</dbReference>
<dbReference type="EMBL" id="AY553004">
    <property type="protein sequence ID" value="AAS91382.1"/>
    <property type="status" value="JOINED"/>
    <property type="molecule type" value="Genomic_DNA"/>
</dbReference>
<dbReference type="EMBL" id="AY553005">
    <property type="protein sequence ID" value="AAS91382.1"/>
    <property type="status" value="JOINED"/>
    <property type="molecule type" value="Genomic_DNA"/>
</dbReference>
<dbReference type="EMBL" id="AY553006">
    <property type="protein sequence ID" value="AAS91382.1"/>
    <property type="status" value="JOINED"/>
    <property type="molecule type" value="Genomic_DNA"/>
</dbReference>
<dbReference type="EMBL" id="AY553007">
    <property type="protein sequence ID" value="AAS91382.1"/>
    <property type="status" value="JOINED"/>
    <property type="molecule type" value="Genomic_DNA"/>
</dbReference>
<dbReference type="EMBL" id="AY553008">
    <property type="protein sequence ID" value="AAS91382.1"/>
    <property type="status" value="JOINED"/>
    <property type="molecule type" value="Genomic_DNA"/>
</dbReference>
<dbReference type="RefSeq" id="XP_030869650.1">
    <property type="nucleotide sequence ID" value="XM_031013790.3"/>
</dbReference>
<dbReference type="SMR" id="P61591"/>
<dbReference type="FunCoup" id="P61591">
    <property type="interactions" value="2375"/>
</dbReference>
<dbReference type="STRING" id="9593.ENSGGOP00000009785"/>
<dbReference type="GeneID" id="101147015"/>
<dbReference type="eggNOG" id="KOG4362">
    <property type="taxonomic scope" value="Eukaryota"/>
</dbReference>
<dbReference type="InParanoid" id="P61591"/>
<dbReference type="Proteomes" id="UP000001519">
    <property type="component" value="Unplaced"/>
</dbReference>
<dbReference type="GO" id="GO:0005813">
    <property type="term" value="C:centrosome"/>
    <property type="evidence" value="ECO:0007669"/>
    <property type="project" value="UniProtKB-SubCell"/>
</dbReference>
<dbReference type="GO" id="GO:0005737">
    <property type="term" value="C:cytoplasm"/>
    <property type="evidence" value="ECO:0007669"/>
    <property type="project" value="UniProtKB-KW"/>
</dbReference>
<dbReference type="GO" id="GO:0021987">
    <property type="term" value="P:cerebral cortex development"/>
    <property type="evidence" value="ECO:0007669"/>
    <property type="project" value="InterPro"/>
</dbReference>
<dbReference type="GO" id="GO:0000278">
    <property type="term" value="P:mitotic cell cycle"/>
    <property type="evidence" value="ECO:0000318"/>
    <property type="project" value="GO_Central"/>
</dbReference>
<dbReference type="CDD" id="cd17716">
    <property type="entry name" value="BRCT_microcephalin_rpt1"/>
    <property type="match status" value="1"/>
</dbReference>
<dbReference type="CDD" id="cd17736">
    <property type="entry name" value="BRCT_microcephalin_rpt2"/>
    <property type="match status" value="1"/>
</dbReference>
<dbReference type="CDD" id="cd17751">
    <property type="entry name" value="BRCT_microcephalin_rpt3"/>
    <property type="match status" value="1"/>
</dbReference>
<dbReference type="FunFam" id="3.40.50.10190:FF:000047">
    <property type="entry name" value="Microcephalin"/>
    <property type="match status" value="1"/>
</dbReference>
<dbReference type="FunFam" id="3.40.50.10190:FF:000053">
    <property type="entry name" value="Microcephalin"/>
    <property type="match status" value="1"/>
</dbReference>
<dbReference type="FunFam" id="3.40.50.10190:FF:000055">
    <property type="entry name" value="Microcephalin"/>
    <property type="match status" value="1"/>
</dbReference>
<dbReference type="Gene3D" id="3.40.50.10190">
    <property type="entry name" value="BRCT domain"/>
    <property type="match status" value="3"/>
</dbReference>
<dbReference type="InterPro" id="IPR001357">
    <property type="entry name" value="BRCT_dom"/>
</dbReference>
<dbReference type="InterPro" id="IPR036420">
    <property type="entry name" value="BRCT_dom_sf"/>
</dbReference>
<dbReference type="InterPro" id="IPR022047">
    <property type="entry name" value="Microcephalin-like"/>
</dbReference>
<dbReference type="InterPro" id="IPR029504">
    <property type="entry name" value="Microcephalin_mammal"/>
</dbReference>
<dbReference type="PANTHER" id="PTHR14625">
    <property type="entry name" value="MICROCEPHALIN"/>
    <property type="match status" value="1"/>
</dbReference>
<dbReference type="PANTHER" id="PTHR14625:SF3">
    <property type="entry name" value="MICROCEPHALIN"/>
    <property type="match status" value="1"/>
</dbReference>
<dbReference type="Pfam" id="PF12258">
    <property type="entry name" value="Microcephalin"/>
    <property type="match status" value="1"/>
</dbReference>
<dbReference type="Pfam" id="PF12738">
    <property type="entry name" value="PTCB-BRCT"/>
    <property type="match status" value="1"/>
</dbReference>
<dbReference type="SMART" id="SM00292">
    <property type="entry name" value="BRCT"/>
    <property type="match status" value="3"/>
</dbReference>
<dbReference type="SUPFAM" id="SSF52113">
    <property type="entry name" value="BRCT domain"/>
    <property type="match status" value="3"/>
</dbReference>
<dbReference type="PROSITE" id="PS50172">
    <property type="entry name" value="BRCT"/>
    <property type="match status" value="3"/>
</dbReference>
<evidence type="ECO:0000250" key="1"/>
<evidence type="ECO:0000250" key="2">
    <source>
        <dbReference type="UniProtKB" id="Q7TT79"/>
    </source>
</evidence>
<evidence type="ECO:0000250" key="3">
    <source>
        <dbReference type="UniProtKB" id="Q8NEM0"/>
    </source>
</evidence>
<evidence type="ECO:0000255" key="4">
    <source>
        <dbReference type="PROSITE-ProRule" id="PRU00033"/>
    </source>
</evidence>
<evidence type="ECO:0000256" key="5">
    <source>
        <dbReference type="SAM" id="MobiDB-lite"/>
    </source>
</evidence>
<proteinExistence type="inferred from homology"/>
<sequence length="835" mass="92591">MAAPILKDVVAYVEVWSSNGTENYSKTFTTQLVDMGAKVSKTFNKQVTHVIFKDGYQSTWDKAQKRGVKLVSVLWVEKCRTAGAHIDESLFPAANTNEHLPSLIKKKRKCMQPKDFNFKTPENDKRFQKKFEKMAKELQRQKTSLDDDVPILLFESNGSLIYTPTIEINSSHHSAMEKRLQEMKEKRENLSPTSSQLIQQSHDNPSNSLCEAPLNISRDTLCSDEYFAGGLHSSFDDLCGNSGCGNQERKLEGSINDIKSDVCISSLVSKANNIHSSPSFTHLDKSSPQKFLSNLSKEEINLQRNIAGKIVTPDQKQAAGMSQETFEEKYRLSPTLSSIKGHLLIHSRPRSSSVKRKRVSHGSHSPPKEKCKRKRSIRRSIMPRLQLCRSEGRLQHVAGPALKALSCGESSYDDYFSPDNLKERNSENLPPESQLPSSPAQFSCRSLSKKERTSIFEMSDFSCVGKKTRTVDITNFTAKTISSPQKTGNGEGRATSSCVTSAPEEALRCCRQAGKEDGCPEGNGFSYTIEDPALPKGHDGDLTALEGSLEEMKEAVGLKSTQNRGTTSKISNSSEGEAQSEHEPCFIVDCNMETSTEEKENLPGGYSGSVKNRPTRHDVLDDSCDGFKDLIKPHEEMKKSGRGKKPTRTLVMTSMPSEKQNVVIQVVDKLKGFSIAPDVCETTTHVLSGKPLRTLNVLLGIARGCWVLSYDWVLWSLELGHWISEEPFELSHHFPAAPLCRSECHLSAGPYRGTLFADQPVMFVSPASSPPVAKLCELVHLCGGRVSQVPRQASIVIGPYSGKKKATVKYLSEKWVLDSITQHKVCASENYLLSQ</sequence>
<keyword id="KW-0963">Cytoplasm</keyword>
<keyword id="KW-0206">Cytoskeleton</keyword>
<keyword id="KW-0597">Phosphoprotein</keyword>
<keyword id="KW-1185">Reference proteome</keyword>
<keyword id="KW-0677">Repeat</keyword>
<protein>
    <recommendedName>
        <fullName evidence="3">Microcephalin</fullName>
    </recommendedName>
</protein>
<gene>
    <name evidence="3" type="primary">MCPH1</name>
</gene>
<reference key="1">
    <citation type="journal article" date="2004" name="Hum. Mol. Genet.">
        <title>Reconstructing the evolutionary history of microcephalin, a gene controlling human brain size.</title>
        <authorList>
            <person name="Evans P.D."/>
            <person name="Anderson J.R."/>
            <person name="Vallender E.J."/>
            <person name="Choi S.S."/>
            <person name="Lahn B.T."/>
        </authorList>
    </citation>
    <scope>NUCLEOTIDE SEQUENCE [GENOMIC DNA]</scope>
</reference>